<protein>
    <recommendedName>
        <fullName evidence="2">tRNA (guanine-N(7)-)-methyltransferase</fullName>
        <ecNumber evidence="2">2.1.1.33</ecNumber>
    </recommendedName>
    <alternativeName>
        <fullName evidence="2">tRNA (guanine(46)-N(7))-methyltransferase</fullName>
    </alternativeName>
    <alternativeName>
        <fullName evidence="2">tRNA(m7G46)-methyltransferase</fullName>
    </alternativeName>
</protein>
<dbReference type="EC" id="2.1.1.33" evidence="2"/>
<dbReference type="EMBL" id="AP009324">
    <property type="protein sequence ID" value="BAF78617.1"/>
    <property type="molecule type" value="Genomic_DNA"/>
</dbReference>
<dbReference type="RefSeq" id="WP_001266161.1">
    <property type="nucleotide sequence ID" value="NC_009782.1"/>
</dbReference>
<dbReference type="SMR" id="A7X3I5"/>
<dbReference type="KEGG" id="saw:SAHV_1734"/>
<dbReference type="HOGENOM" id="CLU_050910_2_1_9"/>
<dbReference type="UniPathway" id="UPA00989"/>
<dbReference type="GO" id="GO:0043527">
    <property type="term" value="C:tRNA methyltransferase complex"/>
    <property type="evidence" value="ECO:0007669"/>
    <property type="project" value="TreeGrafter"/>
</dbReference>
<dbReference type="GO" id="GO:0008176">
    <property type="term" value="F:tRNA (guanine(46)-N7)-methyltransferase activity"/>
    <property type="evidence" value="ECO:0007669"/>
    <property type="project" value="UniProtKB-UniRule"/>
</dbReference>
<dbReference type="CDD" id="cd02440">
    <property type="entry name" value="AdoMet_MTases"/>
    <property type="match status" value="1"/>
</dbReference>
<dbReference type="FunFam" id="3.40.50.150:FF:000035">
    <property type="entry name" value="tRNA (guanine-N(7)-)-methyltransferase"/>
    <property type="match status" value="1"/>
</dbReference>
<dbReference type="Gene3D" id="3.40.50.150">
    <property type="entry name" value="Vaccinia Virus protein VP39"/>
    <property type="match status" value="1"/>
</dbReference>
<dbReference type="HAMAP" id="MF_01057">
    <property type="entry name" value="tRNA_methyltr_TrmB"/>
    <property type="match status" value="1"/>
</dbReference>
<dbReference type="InterPro" id="IPR029063">
    <property type="entry name" value="SAM-dependent_MTases_sf"/>
</dbReference>
<dbReference type="InterPro" id="IPR003358">
    <property type="entry name" value="tRNA_(Gua-N-7)_MeTrfase_Trmb"/>
</dbReference>
<dbReference type="InterPro" id="IPR055361">
    <property type="entry name" value="tRNA_methyltr_TrmB_bact"/>
</dbReference>
<dbReference type="NCBIfam" id="NF001080">
    <property type="entry name" value="PRK00121.2-2"/>
    <property type="match status" value="1"/>
</dbReference>
<dbReference type="NCBIfam" id="TIGR00091">
    <property type="entry name" value="tRNA (guanosine(46)-N7)-methyltransferase TrmB"/>
    <property type="match status" value="1"/>
</dbReference>
<dbReference type="PANTHER" id="PTHR23417">
    <property type="entry name" value="3-DEOXY-D-MANNO-OCTULOSONIC-ACID TRANSFERASE/TRNA GUANINE-N 7 - -METHYLTRANSFERASE"/>
    <property type="match status" value="1"/>
</dbReference>
<dbReference type="PANTHER" id="PTHR23417:SF14">
    <property type="entry name" value="PENTACOTRIPEPTIDE-REPEAT REGION OF PRORP DOMAIN-CONTAINING PROTEIN"/>
    <property type="match status" value="1"/>
</dbReference>
<dbReference type="Pfam" id="PF02390">
    <property type="entry name" value="Methyltransf_4"/>
    <property type="match status" value="1"/>
</dbReference>
<dbReference type="SUPFAM" id="SSF53335">
    <property type="entry name" value="S-adenosyl-L-methionine-dependent methyltransferases"/>
    <property type="match status" value="1"/>
</dbReference>
<dbReference type="PROSITE" id="PS51625">
    <property type="entry name" value="SAM_MT_TRMB"/>
    <property type="match status" value="1"/>
</dbReference>
<keyword id="KW-0489">Methyltransferase</keyword>
<keyword id="KW-0949">S-adenosyl-L-methionine</keyword>
<keyword id="KW-0808">Transferase</keyword>
<keyword id="KW-0819">tRNA processing</keyword>
<sequence length="214" mass="25291">MRVRYKPWAEDYLKDHPELVDMEGQHAGEMTEWFDKTQPIHIEIGSGMGQFITTLAAQNPHINYISMEREKSIVYKVLDKVKEMGLTNLKIICNDAIELNEYFKDGEVSRIYLNFSDPWPKNRHAKRRLTYHTFLALYQQILNDEGDLHFKTDNRGLFAYSLESMSQFGMYFTKINLNLHQEDDGSNILTEYEKKFSDKGSRIYRMEAKFHSQK</sequence>
<comment type="function">
    <text evidence="2">Catalyzes the formation of N(7)-methylguanine at position 46 (m7G46) in tRNA.</text>
</comment>
<comment type="catalytic activity">
    <reaction evidence="2">
        <text>guanosine(46) in tRNA + S-adenosyl-L-methionine = N(7)-methylguanosine(46) in tRNA + S-adenosyl-L-homocysteine</text>
        <dbReference type="Rhea" id="RHEA:42708"/>
        <dbReference type="Rhea" id="RHEA-COMP:10188"/>
        <dbReference type="Rhea" id="RHEA-COMP:10189"/>
        <dbReference type="ChEBI" id="CHEBI:57856"/>
        <dbReference type="ChEBI" id="CHEBI:59789"/>
        <dbReference type="ChEBI" id="CHEBI:74269"/>
        <dbReference type="ChEBI" id="CHEBI:74480"/>
        <dbReference type="EC" id="2.1.1.33"/>
    </reaction>
</comment>
<comment type="pathway">
    <text evidence="2">tRNA modification; N(7)-methylguanine-tRNA biosynthesis.</text>
</comment>
<comment type="similarity">
    <text evidence="2">Belongs to the class I-like SAM-binding methyltransferase superfamily. TrmB family.</text>
</comment>
<proteinExistence type="inferred from homology"/>
<name>TRMB_STAA1</name>
<feature type="chain" id="PRO_1000136361" description="tRNA (guanine-N(7)-)-methyltransferase">
    <location>
        <begin position="1"/>
        <end position="214"/>
    </location>
</feature>
<feature type="active site" evidence="1">
    <location>
        <position position="117"/>
    </location>
</feature>
<feature type="binding site" evidence="2">
    <location>
        <position position="43"/>
    </location>
    <ligand>
        <name>S-adenosyl-L-methionine</name>
        <dbReference type="ChEBI" id="CHEBI:59789"/>
    </ligand>
</feature>
<feature type="binding site" evidence="2">
    <location>
        <position position="68"/>
    </location>
    <ligand>
        <name>S-adenosyl-L-methionine</name>
        <dbReference type="ChEBI" id="CHEBI:59789"/>
    </ligand>
</feature>
<feature type="binding site" evidence="2">
    <location>
        <position position="95"/>
    </location>
    <ligand>
        <name>S-adenosyl-L-methionine</name>
        <dbReference type="ChEBI" id="CHEBI:59789"/>
    </ligand>
</feature>
<feature type="binding site" evidence="2">
    <location>
        <position position="117"/>
    </location>
    <ligand>
        <name>S-adenosyl-L-methionine</name>
        <dbReference type="ChEBI" id="CHEBI:59789"/>
    </ligand>
</feature>
<feature type="binding site" evidence="2">
    <location>
        <position position="121"/>
    </location>
    <ligand>
        <name>substrate</name>
    </ligand>
</feature>
<feature type="binding site" evidence="2">
    <location>
        <position position="153"/>
    </location>
    <ligand>
        <name>substrate</name>
    </ligand>
</feature>
<feature type="binding site" evidence="2">
    <location>
        <begin position="190"/>
        <end position="193"/>
    </location>
    <ligand>
        <name>substrate</name>
    </ligand>
</feature>
<evidence type="ECO:0000250" key="1"/>
<evidence type="ECO:0000255" key="2">
    <source>
        <dbReference type="HAMAP-Rule" id="MF_01057"/>
    </source>
</evidence>
<gene>
    <name evidence="2" type="primary">trmB</name>
    <name type="ordered locus">SAHV_1734</name>
</gene>
<organism>
    <name type="scientific">Staphylococcus aureus (strain Mu3 / ATCC 700698)</name>
    <dbReference type="NCBI Taxonomy" id="418127"/>
    <lineage>
        <taxon>Bacteria</taxon>
        <taxon>Bacillati</taxon>
        <taxon>Bacillota</taxon>
        <taxon>Bacilli</taxon>
        <taxon>Bacillales</taxon>
        <taxon>Staphylococcaceae</taxon>
        <taxon>Staphylococcus</taxon>
    </lineage>
</organism>
<accession>A7X3I5</accession>
<reference key="1">
    <citation type="journal article" date="2008" name="Antimicrob. Agents Chemother.">
        <title>Mutated response regulator graR is responsible for phenotypic conversion of Staphylococcus aureus from heterogeneous vancomycin-intermediate resistance to vancomycin-intermediate resistance.</title>
        <authorList>
            <person name="Neoh H.-M."/>
            <person name="Cui L."/>
            <person name="Yuzawa H."/>
            <person name="Takeuchi F."/>
            <person name="Matsuo M."/>
            <person name="Hiramatsu K."/>
        </authorList>
    </citation>
    <scope>NUCLEOTIDE SEQUENCE [LARGE SCALE GENOMIC DNA]</scope>
    <source>
        <strain>Mu3 / ATCC 700698</strain>
    </source>
</reference>